<accession>Q24087</accession>
<accession>Q8IHB9</accession>
<accession>Q9W4L3</accession>
<organism>
    <name type="scientific">Drosophila melanogaster</name>
    <name type="common">Fruit fly</name>
    <dbReference type="NCBI Taxonomy" id="7227"/>
    <lineage>
        <taxon>Eukaryota</taxon>
        <taxon>Metazoa</taxon>
        <taxon>Ecdysozoa</taxon>
        <taxon>Arthropoda</taxon>
        <taxon>Hexapoda</taxon>
        <taxon>Insecta</taxon>
        <taxon>Pterygota</taxon>
        <taxon>Neoptera</taxon>
        <taxon>Endopterygota</taxon>
        <taxon>Diptera</taxon>
        <taxon>Brachycera</taxon>
        <taxon>Muscomorpha</taxon>
        <taxon>Ephydroidea</taxon>
        <taxon>Drosophilidae</taxon>
        <taxon>Drosophila</taxon>
        <taxon>Sophophora</taxon>
    </lineage>
</organism>
<feature type="chain" id="PRO_0000198855" description="DNA repair endonuclease XPF">
    <location>
        <begin position="1"/>
        <end position="961"/>
    </location>
</feature>
<feature type="domain" description="ERCC4">
    <location>
        <begin position="697"/>
        <end position="777"/>
    </location>
</feature>
<feature type="region of interest" description="Disordered" evidence="2">
    <location>
        <begin position="1"/>
        <end position="27"/>
    </location>
</feature>
<feature type="region of interest" description="Disordered" evidence="2">
    <location>
        <begin position="451"/>
        <end position="485"/>
    </location>
</feature>
<feature type="region of interest" description="Disordered" evidence="2">
    <location>
        <begin position="674"/>
        <end position="693"/>
    </location>
</feature>
<feature type="compositionally biased region" description="Basic and acidic residues" evidence="2">
    <location>
        <begin position="13"/>
        <end position="22"/>
    </location>
</feature>
<feature type="compositionally biased region" description="Polar residues" evidence="2">
    <location>
        <begin position="458"/>
        <end position="469"/>
    </location>
</feature>
<feature type="sequence conflict" description="In Ref. 1; AAC46917." evidence="4" ref="1">
    <original>V</original>
    <variation>G</variation>
    <location>
        <position position="115"/>
    </location>
</feature>
<feature type="sequence conflict" description="In Ref. 1; AAC46917 and 4; AAN71074." evidence="4" ref="1 4">
    <original>S</original>
    <variation>T</variation>
    <location>
        <position position="286"/>
    </location>
</feature>
<feature type="sequence conflict" description="In Ref. 1; AAC46917." evidence="4" ref="1">
    <original>S</original>
    <variation>T</variation>
    <location>
        <position position="318"/>
    </location>
</feature>
<feature type="sequence conflict" description="In Ref. 1; AAC46917." evidence="4" ref="1">
    <original>A</original>
    <variation>P</variation>
    <location>
        <position position="594"/>
    </location>
</feature>
<feature type="sequence conflict" description="In Ref. 1; AAC46917." evidence="4" ref="1">
    <original>A</original>
    <variation>R</variation>
    <location>
        <position position="798"/>
    </location>
</feature>
<feature type="sequence conflict" description="In Ref. 1; AAC46917 and 4; AAN71074." evidence="4" ref="1 4">
    <original>T</original>
    <variation>M</variation>
    <location>
        <position position="853"/>
    </location>
</feature>
<sequence>MADSCAENAAKGTENERPKEVEASADTVPQVEEGVEEYLKRKNMVLLDYEKQMFLDLVEADGLLVCAKGLSYDRVVISILKAYSDSGNLVLVINSSDWEEQYYKSKIEPKYVHEVASTATERERVYLEGGLQFISTRILVVDLLKQRIPIELISGIIVLRAHTIIESCQEAFALRLFRQKNKTGFVKAFSSSPEAFTIGYSHVERTMRNLFVKHLYIWPRFHESVRTVLQPWKIQSIEMHVPISQNITSIQSHILEIMNFLVQEIKRINRTVDMEAVTVENCVTKSFHKILQAQLDCIWHQLNSQTKLIVADLKILRSLMISTMYHDAVSAYAFMKRYRSTEYALSNSGWTLLDAAEQIFKLSRQRVFNGQQEFEPEPCPKWQTLTDLLTKEIPGDMRRSRRSEQQPKVLILCQDARTCHQLKQYLTQGGPRFLLQQALQHEVPVGKLSDNYAKESQTRSAPPKNVSSNKELRREEVSGSQPPLAGMDELAQLLSESETEGQHFEESYMLTMTQPVEVGPAAIDIKPDPDVSIFETIPELEQFDVTAALASVPHQPYICLQTFKTEREGSMALEHMLEQLQPHYVVMYNMNVTAIRQLEVFEARRRLPPADRMKVYFLIHARTVEEQAYLTSLRREKAAFEFIIDTKSKMVIPKYQDGKTDEAFLLLKTYDDEPTDENAKSRQAGGQAPQATKETPKVIVDMREFRSDLPCLIHKRGLEVLPLTITIGDYILTPDICVERKSISDLIGSLNSGRLYNQCVQMQRHYAKPILLIEFDQNKPFHLQGKFMLSQQTSMANADIVQKLQLLTLHFPKLRLIWSPSPYATAQLFEELKLGKPEPDPQTAAALGSDEPTAGEQLHFNSGIYDFLLRLPGVHTRNIHGLLRKGGSLRQLLLRSQKELEELLQSQESAKLLYDILHVAHLPEKDEVTGSTALLAASKQFGAGSHNRFRMAAAASRRGRR</sequence>
<evidence type="ECO:0000250" key="1"/>
<evidence type="ECO:0000256" key="2">
    <source>
        <dbReference type="SAM" id="MobiDB-lite"/>
    </source>
</evidence>
<evidence type="ECO:0000269" key="3">
    <source>
    </source>
</evidence>
<evidence type="ECO:0000305" key="4"/>
<name>XPF_DROME</name>
<dbReference type="EC" id="3.1.-.-"/>
<dbReference type="EMBL" id="U27181">
    <property type="protein sequence ID" value="AAC46917.1"/>
    <property type="status" value="ALT_FRAME"/>
    <property type="molecule type" value="Genomic_DNA"/>
</dbReference>
<dbReference type="EMBL" id="AE014298">
    <property type="protein sequence ID" value="AAF45938.1"/>
    <property type="molecule type" value="Genomic_DNA"/>
</dbReference>
<dbReference type="EMBL" id="BT001319">
    <property type="protein sequence ID" value="AAN71074.1"/>
    <property type="molecule type" value="mRNA"/>
</dbReference>
<dbReference type="PIR" id="S58936">
    <property type="entry name" value="S58936"/>
</dbReference>
<dbReference type="RefSeq" id="NP_001284859.1">
    <property type="nucleotide sequence ID" value="NM_001297930.1"/>
</dbReference>
<dbReference type="RefSeq" id="NP_525068.1">
    <property type="nucleotide sequence ID" value="NM_080329.3"/>
</dbReference>
<dbReference type="SMR" id="Q24087"/>
<dbReference type="BioGRID" id="57890">
    <property type="interactions" value="5"/>
</dbReference>
<dbReference type="FunCoup" id="Q24087">
    <property type="interactions" value="1922"/>
</dbReference>
<dbReference type="IntAct" id="Q24087">
    <property type="interactions" value="2"/>
</dbReference>
<dbReference type="STRING" id="7227.FBpp0070624"/>
<dbReference type="PaxDb" id="7227-FBpp0070624"/>
<dbReference type="EnsemblMetazoa" id="FBtr0070656">
    <property type="protein sequence ID" value="FBpp0070624"/>
    <property type="gene ID" value="FBgn0002707"/>
</dbReference>
<dbReference type="EnsemblMetazoa" id="FBtr0343574">
    <property type="protein sequence ID" value="FBpp0310174"/>
    <property type="gene ID" value="FBgn0002707"/>
</dbReference>
<dbReference type="GeneID" id="31373"/>
<dbReference type="KEGG" id="dme:Dmel_CG3697"/>
<dbReference type="AGR" id="FB:FBgn0002707"/>
<dbReference type="CTD" id="31373"/>
<dbReference type="FlyBase" id="FBgn0002707">
    <property type="gene designation" value="mei-9"/>
</dbReference>
<dbReference type="VEuPathDB" id="VectorBase:FBgn0002707"/>
<dbReference type="eggNOG" id="KOG0442">
    <property type="taxonomic scope" value="Eukaryota"/>
</dbReference>
<dbReference type="HOGENOM" id="CLU_002265_1_0_1"/>
<dbReference type="InParanoid" id="Q24087"/>
<dbReference type="OMA" id="THILDIM"/>
<dbReference type="OrthoDB" id="361020at2759"/>
<dbReference type="PhylomeDB" id="Q24087"/>
<dbReference type="Reactome" id="R-DME-5696395">
    <property type="pathway name" value="Formation of Incision Complex in GG-NER"/>
</dbReference>
<dbReference type="Reactome" id="R-DME-5696400">
    <property type="pathway name" value="Dual Incision in GG-NER"/>
</dbReference>
<dbReference type="Reactome" id="R-DME-6782135">
    <property type="pathway name" value="Dual incision in TC-NER"/>
</dbReference>
<dbReference type="BioGRID-ORCS" id="31373">
    <property type="hits" value="0 hits in 1 CRISPR screen"/>
</dbReference>
<dbReference type="GenomeRNAi" id="31373"/>
<dbReference type="PRO" id="PR:Q24087"/>
<dbReference type="Proteomes" id="UP000000803">
    <property type="component" value="Chromosome X"/>
</dbReference>
<dbReference type="Bgee" id="FBgn0002707">
    <property type="expression patterns" value="Expressed in male accessory gland main cell (Drosophila) in male reproductive gland and 37 other cell types or tissues"/>
</dbReference>
<dbReference type="ExpressionAtlas" id="Q24087">
    <property type="expression patterns" value="baseline and differential"/>
</dbReference>
<dbReference type="GO" id="GO:0000110">
    <property type="term" value="C:nucleotide-excision repair factor 1 complex"/>
    <property type="evidence" value="ECO:0000318"/>
    <property type="project" value="GO_Central"/>
</dbReference>
<dbReference type="GO" id="GO:0032991">
    <property type="term" value="C:protein-containing complex"/>
    <property type="evidence" value="ECO:0000314"/>
    <property type="project" value="FlyBase"/>
</dbReference>
<dbReference type="GO" id="GO:0003684">
    <property type="term" value="F:damaged DNA binding"/>
    <property type="evidence" value="ECO:0000318"/>
    <property type="project" value="GO_Central"/>
</dbReference>
<dbReference type="GO" id="GO:0046982">
    <property type="term" value="F:protein heterodimerization activity"/>
    <property type="evidence" value="ECO:0000353"/>
    <property type="project" value="FlyBase"/>
</dbReference>
<dbReference type="GO" id="GO:0003697">
    <property type="term" value="F:single-stranded DNA binding"/>
    <property type="evidence" value="ECO:0000318"/>
    <property type="project" value="GO_Central"/>
</dbReference>
<dbReference type="GO" id="GO:0000014">
    <property type="term" value="F:single-stranded DNA endodeoxyribonuclease activity"/>
    <property type="evidence" value="ECO:0000318"/>
    <property type="project" value="GO_Central"/>
</dbReference>
<dbReference type="GO" id="GO:0006974">
    <property type="term" value="P:DNA damage response"/>
    <property type="evidence" value="ECO:0000315"/>
    <property type="project" value="FlyBase"/>
</dbReference>
<dbReference type="GO" id="GO:0006310">
    <property type="term" value="P:DNA recombination"/>
    <property type="evidence" value="ECO:0000304"/>
    <property type="project" value="FlyBase"/>
</dbReference>
<dbReference type="GO" id="GO:0006302">
    <property type="term" value="P:double-strand break repair"/>
    <property type="evidence" value="ECO:0000315"/>
    <property type="project" value="FlyBase"/>
</dbReference>
<dbReference type="GO" id="GO:0000724">
    <property type="term" value="P:double-strand break repair via homologous recombination"/>
    <property type="evidence" value="ECO:0000318"/>
    <property type="project" value="GO_Central"/>
</dbReference>
<dbReference type="GO" id="GO:0016321">
    <property type="term" value="P:female meiosis chromosome segregation"/>
    <property type="evidence" value="ECO:0000315"/>
    <property type="project" value="FlyBase"/>
</dbReference>
<dbReference type="GO" id="GO:0007143">
    <property type="term" value="P:female meiotic nuclear division"/>
    <property type="evidence" value="ECO:0000315"/>
    <property type="project" value="FlyBase"/>
</dbReference>
<dbReference type="GO" id="GO:0045132">
    <property type="term" value="P:meiotic chromosome segregation"/>
    <property type="evidence" value="ECO:0000315"/>
    <property type="project" value="FlyBase"/>
</dbReference>
<dbReference type="GO" id="GO:0006298">
    <property type="term" value="P:mismatch repair"/>
    <property type="evidence" value="ECO:0000315"/>
    <property type="project" value="FlyBase"/>
</dbReference>
<dbReference type="GO" id="GO:0006289">
    <property type="term" value="P:nucleotide-excision repair"/>
    <property type="evidence" value="ECO:0000315"/>
    <property type="project" value="FlyBase"/>
</dbReference>
<dbReference type="GO" id="GO:1901255">
    <property type="term" value="P:nucleotide-excision repair involved in interstrand cross-link repair"/>
    <property type="evidence" value="ECO:0000318"/>
    <property type="project" value="GO_Central"/>
</dbReference>
<dbReference type="GO" id="GO:0030716">
    <property type="term" value="P:oocyte fate determination"/>
    <property type="evidence" value="ECO:0000315"/>
    <property type="project" value="FlyBase"/>
</dbReference>
<dbReference type="GO" id="GO:0007131">
    <property type="term" value="P:reciprocal meiotic recombination"/>
    <property type="evidence" value="ECO:0000315"/>
    <property type="project" value="FlyBase"/>
</dbReference>
<dbReference type="GO" id="GO:0000712">
    <property type="term" value="P:resolution of meiotic recombination intermediates"/>
    <property type="evidence" value="ECO:0000315"/>
    <property type="project" value="FlyBase"/>
</dbReference>
<dbReference type="CDD" id="cd20078">
    <property type="entry name" value="XPF_nuclease_XPF_euk"/>
    <property type="match status" value="1"/>
</dbReference>
<dbReference type="FunFam" id="3.40.50.10130:FF:000002">
    <property type="entry name" value="DNA repair endonuclease XPF"/>
    <property type="match status" value="1"/>
</dbReference>
<dbReference type="Gene3D" id="3.40.50.10130">
    <property type="match status" value="1"/>
</dbReference>
<dbReference type="Gene3D" id="1.10.150.20">
    <property type="entry name" value="5' to 3' exonuclease, C-terminal subdomain"/>
    <property type="match status" value="1"/>
</dbReference>
<dbReference type="InterPro" id="IPR006166">
    <property type="entry name" value="ERCC4_domain"/>
</dbReference>
<dbReference type="InterPro" id="IPR011335">
    <property type="entry name" value="Restrct_endonuc-II-like"/>
</dbReference>
<dbReference type="InterPro" id="IPR010994">
    <property type="entry name" value="RuvA_2-like"/>
</dbReference>
<dbReference type="InterPro" id="IPR006167">
    <property type="entry name" value="XPF"/>
</dbReference>
<dbReference type="InterPro" id="IPR047520">
    <property type="entry name" value="XPF_nuclease"/>
</dbReference>
<dbReference type="NCBIfam" id="TIGR00596">
    <property type="entry name" value="rad1"/>
    <property type="match status" value="1"/>
</dbReference>
<dbReference type="PANTHER" id="PTHR10150">
    <property type="entry name" value="DNA REPAIR ENDONUCLEASE XPF"/>
    <property type="match status" value="1"/>
</dbReference>
<dbReference type="PANTHER" id="PTHR10150:SF0">
    <property type="entry name" value="DNA REPAIR ENDONUCLEASE XPF"/>
    <property type="match status" value="1"/>
</dbReference>
<dbReference type="Pfam" id="PF02732">
    <property type="entry name" value="ERCC4"/>
    <property type="match status" value="1"/>
</dbReference>
<dbReference type="SMART" id="SM00891">
    <property type="entry name" value="ERCC4"/>
    <property type="match status" value="1"/>
</dbReference>
<dbReference type="SUPFAM" id="SSF52980">
    <property type="entry name" value="Restriction endonuclease-like"/>
    <property type="match status" value="1"/>
</dbReference>
<dbReference type="SUPFAM" id="SSF47781">
    <property type="entry name" value="RuvA domain 2-like"/>
    <property type="match status" value="1"/>
</dbReference>
<protein>
    <recommendedName>
        <fullName>DNA repair endonuclease XPF</fullName>
        <ecNumber>3.1.-.-</ecNumber>
    </recommendedName>
    <alternativeName>
        <fullName>Protein meiotic 9</fullName>
    </alternativeName>
</protein>
<comment type="function">
    <text>Implicated in recombination events during meiosis, mostly in meiotic exchange. May directly resolve Holliday junctions within recombination intermediates leading to DNA exchange. Also required for the repair of mismatches within meiotic heteroduplex DNA and for nucleotide excision repair.</text>
</comment>
<comment type="subunit">
    <text evidence="1 3">Heterodimer (By similarity). Interacts with hdm.</text>
</comment>
<comment type="subcellular location">
    <subcellularLocation>
        <location evidence="4">Nucleus</location>
    </subcellularLocation>
</comment>
<comment type="similarity">
    <text evidence="4">Belongs to the XPF family.</text>
</comment>
<comment type="sequence caution" evidence="4">
    <conflict type="frameshift">
        <sequence resource="EMBL-CDS" id="AAC46917"/>
    </conflict>
</comment>
<gene>
    <name type="primary">mei-9</name>
    <name type="ORF">CG3697</name>
</gene>
<keyword id="KW-0227">DNA damage</keyword>
<keyword id="KW-0234">DNA repair</keyword>
<keyword id="KW-0238">DNA-binding</keyword>
<keyword id="KW-0255">Endonuclease</keyword>
<keyword id="KW-0378">Hydrolase</keyword>
<keyword id="KW-0469">Meiosis</keyword>
<keyword id="KW-0540">Nuclease</keyword>
<keyword id="KW-0539">Nucleus</keyword>
<keyword id="KW-1185">Reference proteome</keyword>
<proteinExistence type="evidence at protein level"/>
<reference key="1">
    <citation type="journal article" date="1995" name="Genetics">
        <title>The Drosophila meiotic recombination gene mei-9 encodes a homologue of the yeast excision repair protein Rad1.</title>
        <authorList>
            <person name="Sekelsky J.J."/>
            <person name="McKim K.S."/>
            <person name="Chin G.M."/>
            <person name="Hawley R.S."/>
        </authorList>
    </citation>
    <scope>NUCLEOTIDE SEQUENCE [GENOMIC DNA]</scope>
</reference>
<reference key="2">
    <citation type="journal article" date="2000" name="Science">
        <title>The genome sequence of Drosophila melanogaster.</title>
        <authorList>
            <person name="Adams M.D."/>
            <person name="Celniker S.E."/>
            <person name="Holt R.A."/>
            <person name="Evans C.A."/>
            <person name="Gocayne J.D."/>
            <person name="Amanatides P.G."/>
            <person name="Scherer S.E."/>
            <person name="Li P.W."/>
            <person name="Hoskins R.A."/>
            <person name="Galle R.F."/>
            <person name="George R.A."/>
            <person name="Lewis S.E."/>
            <person name="Richards S."/>
            <person name="Ashburner M."/>
            <person name="Henderson S.N."/>
            <person name="Sutton G.G."/>
            <person name="Wortman J.R."/>
            <person name="Yandell M.D."/>
            <person name="Zhang Q."/>
            <person name="Chen L.X."/>
            <person name="Brandon R.C."/>
            <person name="Rogers Y.-H.C."/>
            <person name="Blazej R.G."/>
            <person name="Champe M."/>
            <person name="Pfeiffer B.D."/>
            <person name="Wan K.H."/>
            <person name="Doyle C."/>
            <person name="Baxter E.G."/>
            <person name="Helt G."/>
            <person name="Nelson C.R."/>
            <person name="Miklos G.L.G."/>
            <person name="Abril J.F."/>
            <person name="Agbayani A."/>
            <person name="An H.-J."/>
            <person name="Andrews-Pfannkoch C."/>
            <person name="Baldwin D."/>
            <person name="Ballew R.M."/>
            <person name="Basu A."/>
            <person name="Baxendale J."/>
            <person name="Bayraktaroglu L."/>
            <person name="Beasley E.M."/>
            <person name="Beeson K.Y."/>
            <person name="Benos P.V."/>
            <person name="Berman B.P."/>
            <person name="Bhandari D."/>
            <person name="Bolshakov S."/>
            <person name="Borkova D."/>
            <person name="Botchan M.R."/>
            <person name="Bouck J."/>
            <person name="Brokstein P."/>
            <person name="Brottier P."/>
            <person name="Burtis K.C."/>
            <person name="Busam D.A."/>
            <person name="Butler H."/>
            <person name="Cadieu E."/>
            <person name="Center A."/>
            <person name="Chandra I."/>
            <person name="Cherry J.M."/>
            <person name="Cawley S."/>
            <person name="Dahlke C."/>
            <person name="Davenport L.B."/>
            <person name="Davies P."/>
            <person name="de Pablos B."/>
            <person name="Delcher A."/>
            <person name="Deng Z."/>
            <person name="Mays A.D."/>
            <person name="Dew I."/>
            <person name="Dietz S.M."/>
            <person name="Dodson K."/>
            <person name="Doup L.E."/>
            <person name="Downes M."/>
            <person name="Dugan-Rocha S."/>
            <person name="Dunkov B.C."/>
            <person name="Dunn P."/>
            <person name="Durbin K.J."/>
            <person name="Evangelista C.C."/>
            <person name="Ferraz C."/>
            <person name="Ferriera S."/>
            <person name="Fleischmann W."/>
            <person name="Fosler C."/>
            <person name="Gabrielian A.E."/>
            <person name="Garg N.S."/>
            <person name="Gelbart W.M."/>
            <person name="Glasser K."/>
            <person name="Glodek A."/>
            <person name="Gong F."/>
            <person name="Gorrell J.H."/>
            <person name="Gu Z."/>
            <person name="Guan P."/>
            <person name="Harris M."/>
            <person name="Harris N.L."/>
            <person name="Harvey D.A."/>
            <person name="Heiman T.J."/>
            <person name="Hernandez J.R."/>
            <person name="Houck J."/>
            <person name="Hostin D."/>
            <person name="Houston K.A."/>
            <person name="Howland T.J."/>
            <person name="Wei M.-H."/>
            <person name="Ibegwam C."/>
            <person name="Jalali M."/>
            <person name="Kalush F."/>
            <person name="Karpen G.H."/>
            <person name="Ke Z."/>
            <person name="Kennison J.A."/>
            <person name="Ketchum K.A."/>
            <person name="Kimmel B.E."/>
            <person name="Kodira C.D."/>
            <person name="Kraft C.L."/>
            <person name="Kravitz S."/>
            <person name="Kulp D."/>
            <person name="Lai Z."/>
            <person name="Lasko P."/>
            <person name="Lei Y."/>
            <person name="Levitsky A.A."/>
            <person name="Li J.H."/>
            <person name="Li Z."/>
            <person name="Liang Y."/>
            <person name="Lin X."/>
            <person name="Liu X."/>
            <person name="Mattei B."/>
            <person name="McIntosh T.C."/>
            <person name="McLeod M.P."/>
            <person name="McPherson D."/>
            <person name="Merkulov G."/>
            <person name="Milshina N.V."/>
            <person name="Mobarry C."/>
            <person name="Morris J."/>
            <person name="Moshrefi A."/>
            <person name="Mount S.M."/>
            <person name="Moy M."/>
            <person name="Murphy B."/>
            <person name="Murphy L."/>
            <person name="Muzny D.M."/>
            <person name="Nelson D.L."/>
            <person name="Nelson D.R."/>
            <person name="Nelson K.A."/>
            <person name="Nixon K."/>
            <person name="Nusskern D.R."/>
            <person name="Pacleb J.M."/>
            <person name="Palazzolo M."/>
            <person name="Pittman G.S."/>
            <person name="Pan S."/>
            <person name="Pollard J."/>
            <person name="Puri V."/>
            <person name="Reese M.G."/>
            <person name="Reinert K."/>
            <person name="Remington K."/>
            <person name="Saunders R.D.C."/>
            <person name="Scheeler F."/>
            <person name="Shen H."/>
            <person name="Shue B.C."/>
            <person name="Siden-Kiamos I."/>
            <person name="Simpson M."/>
            <person name="Skupski M.P."/>
            <person name="Smith T.J."/>
            <person name="Spier E."/>
            <person name="Spradling A.C."/>
            <person name="Stapleton M."/>
            <person name="Strong R."/>
            <person name="Sun E."/>
            <person name="Svirskas R."/>
            <person name="Tector C."/>
            <person name="Turner R."/>
            <person name="Venter E."/>
            <person name="Wang A.H."/>
            <person name="Wang X."/>
            <person name="Wang Z.-Y."/>
            <person name="Wassarman D.A."/>
            <person name="Weinstock G.M."/>
            <person name="Weissenbach J."/>
            <person name="Williams S.M."/>
            <person name="Woodage T."/>
            <person name="Worley K.C."/>
            <person name="Wu D."/>
            <person name="Yang S."/>
            <person name="Yao Q.A."/>
            <person name="Ye J."/>
            <person name="Yeh R.-F."/>
            <person name="Zaveri J.S."/>
            <person name="Zhan M."/>
            <person name="Zhang G."/>
            <person name="Zhao Q."/>
            <person name="Zheng L."/>
            <person name="Zheng X.H."/>
            <person name="Zhong F.N."/>
            <person name="Zhong W."/>
            <person name="Zhou X."/>
            <person name="Zhu S.C."/>
            <person name="Zhu X."/>
            <person name="Smith H.O."/>
            <person name="Gibbs R.A."/>
            <person name="Myers E.W."/>
            <person name="Rubin G.M."/>
            <person name="Venter J.C."/>
        </authorList>
    </citation>
    <scope>NUCLEOTIDE SEQUENCE [LARGE SCALE GENOMIC DNA]</scope>
    <source>
        <strain>Berkeley</strain>
    </source>
</reference>
<reference key="3">
    <citation type="journal article" date="2002" name="Genome Biol.">
        <title>Annotation of the Drosophila melanogaster euchromatic genome: a systematic review.</title>
        <authorList>
            <person name="Misra S."/>
            <person name="Crosby M.A."/>
            <person name="Mungall C.J."/>
            <person name="Matthews B.B."/>
            <person name="Campbell K.S."/>
            <person name="Hradecky P."/>
            <person name="Huang Y."/>
            <person name="Kaminker J.S."/>
            <person name="Millburn G.H."/>
            <person name="Prochnik S.E."/>
            <person name="Smith C.D."/>
            <person name="Tupy J.L."/>
            <person name="Whitfield E.J."/>
            <person name="Bayraktaroglu L."/>
            <person name="Berman B.P."/>
            <person name="Bettencourt B.R."/>
            <person name="Celniker S.E."/>
            <person name="de Grey A.D.N.J."/>
            <person name="Drysdale R.A."/>
            <person name="Harris N.L."/>
            <person name="Richter J."/>
            <person name="Russo S."/>
            <person name="Schroeder A.J."/>
            <person name="Shu S.Q."/>
            <person name="Stapleton M."/>
            <person name="Yamada C."/>
            <person name="Ashburner M."/>
            <person name="Gelbart W.M."/>
            <person name="Rubin G.M."/>
            <person name="Lewis S.E."/>
        </authorList>
    </citation>
    <scope>GENOME REANNOTATION</scope>
    <source>
        <strain>Berkeley</strain>
    </source>
</reference>
<reference key="4">
    <citation type="journal article" date="2002" name="Genome Biol.">
        <title>A Drosophila full-length cDNA resource.</title>
        <authorList>
            <person name="Stapleton M."/>
            <person name="Carlson J.W."/>
            <person name="Brokstein P."/>
            <person name="Yu C."/>
            <person name="Champe M."/>
            <person name="George R.A."/>
            <person name="Guarin H."/>
            <person name="Kronmiller B."/>
            <person name="Pacleb J.M."/>
            <person name="Park S."/>
            <person name="Wan K.H."/>
            <person name="Rubin G.M."/>
            <person name="Celniker S.E."/>
        </authorList>
    </citation>
    <scope>NUCLEOTIDE SEQUENCE [LARGE SCALE MRNA]</scope>
    <source>
        <strain>Berkeley</strain>
        <tissue>Testis</tissue>
    </source>
</reference>
<reference key="5">
    <citation type="journal article" date="2009" name="Genetics">
        <title>Drosophila hold'em is required for a subset of meiotic crossovers and interacts with the dna repair endonuclease complex subunits MEI-9 and ERCC1.</title>
        <authorList>
            <person name="Joyce E.F."/>
            <person name="Tanneti S.N."/>
            <person name="McKim K.S."/>
        </authorList>
    </citation>
    <scope>INTERACTION WITH HDM</scope>
</reference>